<evidence type="ECO:0000250" key="1"/>
<evidence type="ECO:0000255" key="2">
    <source>
        <dbReference type="PROSITE-ProRule" id="PRU01191"/>
    </source>
</evidence>
<evidence type="ECO:0000269" key="3">
    <source>
    </source>
</evidence>
<evidence type="ECO:0000269" key="4">
    <source>
    </source>
</evidence>
<evidence type="ECO:0000305" key="5"/>
<protein>
    <recommendedName>
        <fullName>Scarecrow-like protein 21</fullName>
        <shortName>AtSCL21</shortName>
    </recommendedName>
    <alternativeName>
        <fullName>GRAS family protein 11</fullName>
        <shortName>AtGRAS-11</shortName>
    </alternativeName>
</protein>
<organism>
    <name type="scientific">Arabidopsis thaliana</name>
    <name type="common">Mouse-ear cress</name>
    <dbReference type="NCBI Taxonomy" id="3702"/>
    <lineage>
        <taxon>Eukaryota</taxon>
        <taxon>Viridiplantae</taxon>
        <taxon>Streptophyta</taxon>
        <taxon>Embryophyta</taxon>
        <taxon>Tracheophyta</taxon>
        <taxon>Spermatophyta</taxon>
        <taxon>Magnoliopsida</taxon>
        <taxon>eudicotyledons</taxon>
        <taxon>Gunneridae</taxon>
        <taxon>Pentapetalae</taxon>
        <taxon>rosids</taxon>
        <taxon>malvids</taxon>
        <taxon>Brassicales</taxon>
        <taxon>Brassicaceae</taxon>
        <taxon>Camelineae</taxon>
        <taxon>Arabidopsis</taxon>
    </lineage>
</organism>
<keyword id="KW-0539">Nucleus</keyword>
<keyword id="KW-1185">Reference proteome</keyword>
<keyword id="KW-0804">Transcription</keyword>
<keyword id="KW-0805">Transcription regulation</keyword>
<gene>
    <name type="primary">SCL21</name>
    <name type="ordered locus">At2g04890</name>
    <name type="ORF">F1O13.2</name>
</gene>
<proteinExistence type="evidence at protein level"/>
<name>SCL21_ARATH</name>
<dbReference type="EMBL" id="AF210732">
    <property type="protein sequence ID" value="AAF21044.1"/>
    <property type="molecule type" value="mRNA"/>
</dbReference>
<dbReference type="EMBL" id="AC006955">
    <property type="protein sequence ID" value="AAM15339.1"/>
    <property type="molecule type" value="Genomic_DNA"/>
</dbReference>
<dbReference type="EMBL" id="AC007211">
    <property type="protein sequence ID" value="AAD25580.1"/>
    <property type="molecule type" value="Genomic_DNA"/>
</dbReference>
<dbReference type="EMBL" id="CP002685">
    <property type="protein sequence ID" value="AEC05882.1"/>
    <property type="molecule type" value="Genomic_DNA"/>
</dbReference>
<dbReference type="EMBL" id="AK175210">
    <property type="protein sequence ID" value="BAD42973.1"/>
    <property type="molecule type" value="mRNA"/>
</dbReference>
<dbReference type="EMBL" id="AK175990">
    <property type="protein sequence ID" value="BAD43753.1"/>
    <property type="molecule type" value="mRNA"/>
</dbReference>
<dbReference type="EMBL" id="AK176099">
    <property type="protein sequence ID" value="BAD43862.1"/>
    <property type="molecule type" value="mRNA"/>
</dbReference>
<dbReference type="EMBL" id="AK221099">
    <property type="protein sequence ID" value="BAD94984.1"/>
    <property type="molecule type" value="mRNA"/>
</dbReference>
<dbReference type="EMBL" id="BT026455">
    <property type="protein sequence ID" value="ABH04562.1"/>
    <property type="molecule type" value="mRNA"/>
</dbReference>
<dbReference type="PIR" id="G84462">
    <property type="entry name" value="G84462"/>
</dbReference>
<dbReference type="RefSeq" id="NP_178566.1">
    <property type="nucleotide sequence ID" value="NM_126521.3"/>
</dbReference>
<dbReference type="SMR" id="Q9S7H5"/>
<dbReference type="BioGRID" id="437">
    <property type="interactions" value="47"/>
</dbReference>
<dbReference type="FunCoup" id="Q9S7H5">
    <property type="interactions" value="8"/>
</dbReference>
<dbReference type="IntAct" id="Q9S7H5">
    <property type="interactions" value="40"/>
</dbReference>
<dbReference type="STRING" id="3702.Q9S7H5"/>
<dbReference type="PaxDb" id="3702-AT2G04890.1"/>
<dbReference type="ProteomicsDB" id="232804"/>
<dbReference type="EnsemblPlants" id="AT2G04890.1">
    <property type="protein sequence ID" value="AT2G04890.1"/>
    <property type="gene ID" value="AT2G04890"/>
</dbReference>
<dbReference type="GeneID" id="815036"/>
<dbReference type="Gramene" id="AT2G04890.1">
    <property type="protein sequence ID" value="AT2G04890.1"/>
    <property type="gene ID" value="AT2G04890"/>
</dbReference>
<dbReference type="KEGG" id="ath:AT2G04890"/>
<dbReference type="Araport" id="AT2G04890"/>
<dbReference type="TAIR" id="AT2G04890">
    <property type="gene designation" value="SCL21"/>
</dbReference>
<dbReference type="eggNOG" id="ENOG502QRZD">
    <property type="taxonomic scope" value="Eukaryota"/>
</dbReference>
<dbReference type="HOGENOM" id="CLU_011924_0_1_1"/>
<dbReference type="InParanoid" id="Q9S7H5"/>
<dbReference type="OMA" id="KCKEPVA"/>
<dbReference type="OrthoDB" id="593669at2759"/>
<dbReference type="PhylomeDB" id="Q9S7H5"/>
<dbReference type="PRO" id="PR:Q9S7H5"/>
<dbReference type="Proteomes" id="UP000006548">
    <property type="component" value="Chromosome 2"/>
</dbReference>
<dbReference type="ExpressionAtlas" id="Q9S7H5">
    <property type="expression patterns" value="baseline and differential"/>
</dbReference>
<dbReference type="GO" id="GO:0005634">
    <property type="term" value="C:nucleus"/>
    <property type="evidence" value="ECO:0007669"/>
    <property type="project" value="UniProtKB-SubCell"/>
</dbReference>
<dbReference type="GO" id="GO:0003700">
    <property type="term" value="F:DNA-binding transcription factor activity"/>
    <property type="evidence" value="ECO:0000250"/>
    <property type="project" value="TAIR"/>
</dbReference>
<dbReference type="GO" id="GO:0006355">
    <property type="term" value="P:regulation of DNA-templated transcription"/>
    <property type="evidence" value="ECO:0000304"/>
    <property type="project" value="TAIR"/>
</dbReference>
<dbReference type="InterPro" id="IPR005202">
    <property type="entry name" value="TF_GRAS"/>
</dbReference>
<dbReference type="PANTHER" id="PTHR31636">
    <property type="entry name" value="OSJNBA0084A10.13 PROTEIN-RELATED"/>
    <property type="match status" value="1"/>
</dbReference>
<dbReference type="Pfam" id="PF03514">
    <property type="entry name" value="GRAS"/>
    <property type="match status" value="1"/>
</dbReference>
<dbReference type="PROSITE" id="PS50985">
    <property type="entry name" value="GRAS"/>
    <property type="match status" value="1"/>
</dbReference>
<accession>Q9S7H5</accession>
<accession>Q67ZL8</accession>
<accession>Q67ZX7</accession>
<feature type="chain" id="PRO_0000350860" description="Scarecrow-like protein 21">
    <location>
        <begin position="1"/>
        <end position="413"/>
    </location>
</feature>
<feature type="domain" description="GRAS" evidence="2">
    <location>
        <begin position="41"/>
        <end position="413"/>
    </location>
</feature>
<feature type="region of interest" description="Leucine repeat I (LRI)" evidence="2">
    <location>
        <begin position="48"/>
        <end position="108"/>
    </location>
</feature>
<feature type="region of interest" description="VHIID" evidence="2">
    <location>
        <begin position="127"/>
        <end position="192"/>
    </location>
</feature>
<feature type="region of interest" description="Leucine repeat II (LRII)" evidence="2">
    <location>
        <begin position="201"/>
        <end position="233"/>
    </location>
</feature>
<feature type="region of interest" description="PFYRE" evidence="2">
    <location>
        <begin position="242"/>
        <end position="336"/>
    </location>
</feature>
<feature type="region of interest" description="SAW" evidence="2">
    <location>
        <begin position="339"/>
        <end position="413"/>
    </location>
</feature>
<feature type="short sequence motif" description="VHIID" evidence="2">
    <location>
        <begin position="158"/>
        <end position="162"/>
    </location>
</feature>
<feature type="sequence conflict" description="In Ref. 4; BAD94984/BAD43753." evidence="5" ref="4">
    <original>E</original>
    <variation>G</variation>
    <location>
        <position position="27"/>
    </location>
</feature>
<feature type="sequence conflict" description="In Ref. 4; BAD94984/BAD43753." evidence="5" ref="4">
    <original>I</original>
    <variation>M</variation>
    <location>
        <position position="338"/>
    </location>
</feature>
<reference key="1">
    <citation type="journal article" date="2000" name="Genes Dev.">
        <title>PAT1, a new member of the GRAS family, is involved in phytochrome A signal transduction.</title>
        <authorList>
            <person name="Bolle C."/>
            <person name="Koncz C."/>
            <person name="Chua N.-H."/>
        </authorList>
    </citation>
    <scope>NUCLEOTIDE SEQUENCE [MRNA]</scope>
    <source>
        <strain>cv. Columbia</strain>
    </source>
</reference>
<reference key="2">
    <citation type="journal article" date="1999" name="Nature">
        <title>Sequence and analysis of chromosome 2 of the plant Arabidopsis thaliana.</title>
        <authorList>
            <person name="Lin X."/>
            <person name="Kaul S."/>
            <person name="Rounsley S.D."/>
            <person name="Shea T.P."/>
            <person name="Benito M.-I."/>
            <person name="Town C.D."/>
            <person name="Fujii C.Y."/>
            <person name="Mason T.M."/>
            <person name="Bowman C.L."/>
            <person name="Barnstead M.E."/>
            <person name="Feldblyum T.V."/>
            <person name="Buell C.R."/>
            <person name="Ketchum K.A."/>
            <person name="Lee J.J."/>
            <person name="Ronning C.M."/>
            <person name="Koo H.L."/>
            <person name="Moffat K.S."/>
            <person name="Cronin L.A."/>
            <person name="Shen M."/>
            <person name="Pai G."/>
            <person name="Van Aken S."/>
            <person name="Umayam L."/>
            <person name="Tallon L.J."/>
            <person name="Gill J.E."/>
            <person name="Adams M.D."/>
            <person name="Carrera A.J."/>
            <person name="Creasy T.H."/>
            <person name="Goodman H.M."/>
            <person name="Somerville C.R."/>
            <person name="Copenhaver G.P."/>
            <person name="Preuss D."/>
            <person name="Nierman W.C."/>
            <person name="White O."/>
            <person name="Eisen J.A."/>
            <person name="Salzberg S.L."/>
            <person name="Fraser C.M."/>
            <person name="Venter J.C."/>
        </authorList>
    </citation>
    <scope>NUCLEOTIDE SEQUENCE [LARGE SCALE GENOMIC DNA]</scope>
    <source>
        <strain>cv. Columbia</strain>
    </source>
</reference>
<reference key="3">
    <citation type="journal article" date="2017" name="Plant J.">
        <title>Araport11: a complete reannotation of the Arabidopsis thaliana reference genome.</title>
        <authorList>
            <person name="Cheng C.Y."/>
            <person name="Krishnakumar V."/>
            <person name="Chan A.P."/>
            <person name="Thibaud-Nissen F."/>
            <person name="Schobel S."/>
            <person name="Town C.D."/>
        </authorList>
    </citation>
    <scope>GENOME REANNOTATION</scope>
    <source>
        <strain>cv. Columbia</strain>
    </source>
</reference>
<reference key="4">
    <citation type="submission" date="2005-03" db="EMBL/GenBank/DDBJ databases">
        <title>Large-scale analysis of RIKEN Arabidopsis full-length (RAFL) cDNAs.</title>
        <authorList>
            <person name="Totoki Y."/>
            <person name="Seki M."/>
            <person name="Ishida J."/>
            <person name="Nakajima M."/>
            <person name="Enju A."/>
            <person name="Kamiya A."/>
            <person name="Narusaka M."/>
            <person name="Shin-i T."/>
            <person name="Nakagawa M."/>
            <person name="Sakamoto N."/>
            <person name="Oishi K."/>
            <person name="Kohara Y."/>
            <person name="Kobayashi M."/>
            <person name="Toyoda A."/>
            <person name="Sakaki Y."/>
            <person name="Sakurai T."/>
            <person name="Iida K."/>
            <person name="Akiyama K."/>
            <person name="Satou M."/>
            <person name="Toyoda T."/>
            <person name="Konagaya A."/>
            <person name="Carninci P."/>
            <person name="Kawai J."/>
            <person name="Hayashizaki Y."/>
            <person name="Shinozaki K."/>
        </authorList>
    </citation>
    <scope>NUCLEOTIDE SEQUENCE [LARGE SCALE MRNA]</scope>
    <source>
        <strain>cv. Columbia</strain>
    </source>
</reference>
<reference key="5">
    <citation type="submission" date="2006-08" db="EMBL/GenBank/DDBJ databases">
        <title>Arabidopsis ORF clones.</title>
        <authorList>
            <person name="Quinitio C."/>
            <person name="Chen H."/>
            <person name="Kim C.J."/>
            <person name="Shinn P."/>
            <person name="Ecker J.R."/>
        </authorList>
    </citation>
    <scope>NUCLEOTIDE SEQUENCE [LARGE SCALE MRNA]</scope>
    <source>
        <strain>cv. Columbia</strain>
    </source>
</reference>
<reference key="6">
    <citation type="journal article" date="2004" name="Plant Mol. Biol.">
        <title>Genome-wide analysis of the GRAS gene family in rice and Arabidopsis.</title>
        <authorList>
            <person name="Tian C."/>
            <person name="Wan P."/>
            <person name="Sun S."/>
            <person name="Li J."/>
            <person name="Chen M."/>
        </authorList>
    </citation>
    <scope>GENE FAMILY</scope>
</reference>
<reference key="7">
    <citation type="journal article" date="2006" name="Mol. Plant Microbe Interact.">
        <title>A root-knot nematode secretory peptide functions as a ligand for a plant transcription factor.</title>
        <authorList>
            <person name="Huang G."/>
            <person name="Dong R."/>
            <person name="Allen R."/>
            <person name="Davis E.L."/>
            <person name="Baum T.J."/>
            <person name="Hussey R.S."/>
        </authorList>
    </citation>
    <scope>INTERACTION WITH PARASITIC NEMATODE PEPTIDE 16D10</scope>
</reference>
<reference key="8">
    <citation type="journal article" date="2008" name="Plant Mol. Biol.">
        <title>Large-scale analysis of the GRAS gene family in Arabidopsis thaliana.</title>
        <authorList>
            <person name="Lee M.-H."/>
            <person name="Kim B."/>
            <person name="Song S.-K."/>
            <person name="Heo J.-O."/>
            <person name="Yu N.-I."/>
            <person name="Lee S.A."/>
            <person name="Kim M."/>
            <person name="Kim D.G."/>
            <person name="Sohn S.O."/>
            <person name="Lim C.E."/>
            <person name="Chang K.S."/>
            <person name="Lee M.M."/>
            <person name="Lim J."/>
        </authorList>
    </citation>
    <scope>GENE FAMILY</scope>
    <scope>TISSUE SPECIFICITY</scope>
</reference>
<sequence length="413" mass="46468">MDNVRGSIMLQPLPEIAESIDDAICHELSMWPDDAKDLLLIVEAISRGDLKLVLVACAKAVSENNLLMARWCMGELRGMVSISGEPIQRLGAYMLEGLVARLAASGSSIYKSLQSREPESYEFLSYVYVLHEVCPYFKFGYMSANGAIAEAMKDEERIHIIDFQIGQGSQWIALIQAFAARPGGAPNIRITGVGDGSVLVTVKKRLEKLAKKFDVPFRFNAVSRPSCEVEVENLDVRDGEALGVNFAYMLHHLPDESVSMENHRDRLLRMVKSLSPKVVTLVEQECNTNTSPFLPRFLETLSYYTAMFESIDVMLPRNHKERINIEQHCMARDVVNIIACEGAERIERHELLGKWKSRFSMAGFEPYPLSSIISATIRALLRDYSNGYAIEERDGALYLGWMDRILVSSCAWK</sequence>
<comment type="function">
    <text evidence="1">Probable transcription factor involved in plant development.</text>
</comment>
<comment type="subunit">
    <text evidence="3">Interacts with Meloidogyne incognita 16D10.</text>
</comment>
<comment type="interaction">
    <interactant intactId="EBI-1238472">
        <id>Q9S7H5</id>
    </interactant>
    <interactant intactId="EBI-2130977">
        <id>Q9LY29</id>
        <label>ERF115</label>
    </interactant>
    <organismsDiffer>false</organismsDiffer>
    <experiments>3</experiments>
</comment>
<comment type="interaction">
    <interactant intactId="EBI-1238472">
        <id>Q9S7H5</id>
    </interactant>
    <interactant intactId="EBI-25514205">
        <id>Q38Q40</id>
        <label>ERF122</label>
    </interactant>
    <organismsDiffer>false</organismsDiffer>
    <experiments>3</experiments>
</comment>
<comment type="interaction">
    <interactant intactId="EBI-1238472">
        <id>Q9S7H5</id>
    </interactant>
    <interactant intactId="EBI-4426127">
        <id>Q8GXL7</id>
        <label>GATA24</label>
    </interactant>
    <organismsDiffer>false</organismsDiffer>
    <experiments>6</experiments>
</comment>
<comment type="interaction">
    <interactant intactId="EBI-1238472">
        <id>Q9S7H5</id>
    </interactant>
    <interactant intactId="EBI-4435064">
        <id>Q8H1G0</id>
        <label>GATA28</label>
    </interactant>
    <organismsDiffer>false</organismsDiffer>
    <experiments>3</experiments>
</comment>
<comment type="interaction">
    <interactant intactId="EBI-1238472">
        <id>Q9S7H5</id>
    </interactant>
    <interactant intactId="EBI-4426144">
        <id>Q9C9L2</id>
        <label>TCP15</label>
    </interactant>
    <organismsDiffer>false</organismsDiffer>
    <experiments>3</experiments>
</comment>
<comment type="interaction">
    <interactant intactId="EBI-1238472">
        <id>Q9S7H5</id>
    </interactant>
    <interactant intactId="EBI-15192325">
        <id>Q8LPR5</id>
        <label>TCP4</label>
    </interactant>
    <organismsDiffer>false</organismsDiffer>
    <experiments>3</experiments>
</comment>
<comment type="interaction">
    <interactant intactId="EBI-1238472">
        <id>Q9S7H5</id>
    </interactant>
    <interactant intactId="EBI-541307">
        <id>P43273</id>
        <label>TGA2</label>
    </interactant>
    <organismsDiffer>false</organismsDiffer>
    <experiments>3</experiments>
</comment>
<comment type="interaction">
    <interactant intactId="EBI-1238472">
        <id>Q9S7H5</id>
    </interactant>
    <interactant intactId="EBI-15206004">
        <id>Q8GY55</id>
        <label>TIFY4B</label>
    </interactant>
    <organismsDiffer>false</organismsDiffer>
    <experiments>4</experiments>
</comment>
<comment type="interaction">
    <interactant intactId="EBI-1238472">
        <id>Q9S7H5</id>
    </interactant>
    <interactant intactId="EBI-4426557">
        <id>Q84MB2</id>
        <label>TIFY8</label>
    </interactant>
    <organismsDiffer>false</organismsDiffer>
    <experiments>4</experiments>
</comment>
<comment type="subcellular location">
    <subcellularLocation>
        <location evidence="5">Nucleus</location>
    </subcellularLocation>
</comment>
<comment type="tissue specificity">
    <text evidence="4">Expressed in seedlings, roots, cotyledons, leaves and flowers.</text>
</comment>
<comment type="similarity">
    <text evidence="5">Belongs to the GRAS family.</text>
</comment>